<evidence type="ECO:0000255" key="1">
    <source>
        <dbReference type="HAMAP-Rule" id="MF_01315"/>
    </source>
</evidence>
<evidence type="ECO:0000256" key="2">
    <source>
        <dbReference type="SAM" id="MobiDB-lite"/>
    </source>
</evidence>
<evidence type="ECO:0000305" key="3"/>
<protein>
    <recommendedName>
        <fullName evidence="1">Small ribosomal subunit protein uS13</fullName>
    </recommendedName>
    <alternativeName>
        <fullName evidence="3">30S ribosomal protein S13</fullName>
    </alternativeName>
</protein>
<name>RS13_STRPD</name>
<dbReference type="EMBL" id="CP000260">
    <property type="protein sequence ID" value="ABF33136.1"/>
    <property type="molecule type" value="Genomic_DNA"/>
</dbReference>
<dbReference type="RefSeq" id="WP_002986615.1">
    <property type="nucleotide sequence ID" value="NZ_CVUH01000001.1"/>
</dbReference>
<dbReference type="SMR" id="Q1JJ37"/>
<dbReference type="GeneID" id="69900050"/>
<dbReference type="KEGG" id="sph:MGAS10270_Spy0071"/>
<dbReference type="HOGENOM" id="CLU_103849_1_1_9"/>
<dbReference type="Proteomes" id="UP000002436">
    <property type="component" value="Chromosome"/>
</dbReference>
<dbReference type="GO" id="GO:0005829">
    <property type="term" value="C:cytosol"/>
    <property type="evidence" value="ECO:0007669"/>
    <property type="project" value="TreeGrafter"/>
</dbReference>
<dbReference type="GO" id="GO:0015935">
    <property type="term" value="C:small ribosomal subunit"/>
    <property type="evidence" value="ECO:0007669"/>
    <property type="project" value="TreeGrafter"/>
</dbReference>
<dbReference type="GO" id="GO:0019843">
    <property type="term" value="F:rRNA binding"/>
    <property type="evidence" value="ECO:0007669"/>
    <property type="project" value="UniProtKB-UniRule"/>
</dbReference>
<dbReference type="GO" id="GO:0003735">
    <property type="term" value="F:structural constituent of ribosome"/>
    <property type="evidence" value="ECO:0007669"/>
    <property type="project" value="InterPro"/>
</dbReference>
<dbReference type="GO" id="GO:0000049">
    <property type="term" value="F:tRNA binding"/>
    <property type="evidence" value="ECO:0007669"/>
    <property type="project" value="UniProtKB-UniRule"/>
</dbReference>
<dbReference type="GO" id="GO:0006412">
    <property type="term" value="P:translation"/>
    <property type="evidence" value="ECO:0007669"/>
    <property type="project" value="UniProtKB-UniRule"/>
</dbReference>
<dbReference type="FunFam" id="1.10.8.50:FF:000001">
    <property type="entry name" value="30S ribosomal protein S13"/>
    <property type="match status" value="1"/>
</dbReference>
<dbReference type="FunFam" id="4.10.910.10:FF:000001">
    <property type="entry name" value="30S ribosomal protein S13"/>
    <property type="match status" value="1"/>
</dbReference>
<dbReference type="Gene3D" id="1.10.8.50">
    <property type="match status" value="1"/>
</dbReference>
<dbReference type="Gene3D" id="4.10.910.10">
    <property type="entry name" value="30s ribosomal protein s13, domain 2"/>
    <property type="match status" value="1"/>
</dbReference>
<dbReference type="HAMAP" id="MF_01315">
    <property type="entry name" value="Ribosomal_uS13"/>
    <property type="match status" value="1"/>
</dbReference>
<dbReference type="InterPro" id="IPR027437">
    <property type="entry name" value="Rbsml_uS13_C"/>
</dbReference>
<dbReference type="InterPro" id="IPR001892">
    <property type="entry name" value="Ribosomal_uS13"/>
</dbReference>
<dbReference type="InterPro" id="IPR010979">
    <property type="entry name" value="Ribosomal_uS13-like_H2TH"/>
</dbReference>
<dbReference type="InterPro" id="IPR019980">
    <property type="entry name" value="Ribosomal_uS13_bac-type"/>
</dbReference>
<dbReference type="InterPro" id="IPR018269">
    <property type="entry name" value="Ribosomal_uS13_CS"/>
</dbReference>
<dbReference type="NCBIfam" id="TIGR03631">
    <property type="entry name" value="uS13_bact"/>
    <property type="match status" value="1"/>
</dbReference>
<dbReference type="PANTHER" id="PTHR10871">
    <property type="entry name" value="30S RIBOSOMAL PROTEIN S13/40S RIBOSOMAL PROTEIN S18"/>
    <property type="match status" value="1"/>
</dbReference>
<dbReference type="PANTHER" id="PTHR10871:SF1">
    <property type="entry name" value="SMALL RIBOSOMAL SUBUNIT PROTEIN US13M"/>
    <property type="match status" value="1"/>
</dbReference>
<dbReference type="Pfam" id="PF00416">
    <property type="entry name" value="Ribosomal_S13"/>
    <property type="match status" value="1"/>
</dbReference>
<dbReference type="PIRSF" id="PIRSF002134">
    <property type="entry name" value="Ribosomal_S13"/>
    <property type="match status" value="1"/>
</dbReference>
<dbReference type="SUPFAM" id="SSF46946">
    <property type="entry name" value="S13-like H2TH domain"/>
    <property type="match status" value="1"/>
</dbReference>
<dbReference type="PROSITE" id="PS00646">
    <property type="entry name" value="RIBOSOMAL_S13_1"/>
    <property type="match status" value="1"/>
</dbReference>
<dbReference type="PROSITE" id="PS50159">
    <property type="entry name" value="RIBOSOMAL_S13_2"/>
    <property type="match status" value="1"/>
</dbReference>
<feature type="chain" id="PRO_0000306720" description="Small ribosomal subunit protein uS13">
    <location>
        <begin position="1"/>
        <end position="121"/>
    </location>
</feature>
<feature type="region of interest" description="Disordered" evidence="2">
    <location>
        <begin position="96"/>
        <end position="121"/>
    </location>
</feature>
<feature type="compositionally biased region" description="Basic residues" evidence="2">
    <location>
        <begin position="106"/>
        <end position="121"/>
    </location>
</feature>
<reference key="1">
    <citation type="journal article" date="2006" name="Proc. Natl. Acad. Sci. U.S.A.">
        <title>Molecular genetic anatomy of inter- and intraserotype variation in the human bacterial pathogen group A Streptococcus.</title>
        <authorList>
            <person name="Beres S.B."/>
            <person name="Richter E.W."/>
            <person name="Nagiec M.J."/>
            <person name="Sumby P."/>
            <person name="Porcella S.F."/>
            <person name="DeLeo F.R."/>
            <person name="Musser J.M."/>
        </authorList>
    </citation>
    <scope>NUCLEOTIDE SEQUENCE [LARGE SCALE GENOMIC DNA]</scope>
    <source>
        <strain>MGAS10270</strain>
    </source>
</reference>
<organism>
    <name type="scientific">Streptococcus pyogenes serotype M2 (strain MGAS10270)</name>
    <dbReference type="NCBI Taxonomy" id="370552"/>
    <lineage>
        <taxon>Bacteria</taxon>
        <taxon>Bacillati</taxon>
        <taxon>Bacillota</taxon>
        <taxon>Bacilli</taxon>
        <taxon>Lactobacillales</taxon>
        <taxon>Streptococcaceae</taxon>
        <taxon>Streptococcus</taxon>
    </lineage>
</organism>
<proteinExistence type="inferred from homology"/>
<gene>
    <name evidence="1" type="primary">rpsM</name>
    <name type="ordered locus">MGAS10270_Spy0071</name>
</gene>
<accession>Q1JJ37</accession>
<sequence>MARIAGVDIPNDKRVVISLTYVYGIGLATSKKILAAAGISEDIRVKDLTSDQEDAIRREVDAIKVEGDLRREVNMNIKRLMEIGSYRGIRHRRGLPVRGQNTKNNARTRKGKAVAIAGKKK</sequence>
<keyword id="KW-0687">Ribonucleoprotein</keyword>
<keyword id="KW-0689">Ribosomal protein</keyword>
<keyword id="KW-0694">RNA-binding</keyword>
<keyword id="KW-0699">rRNA-binding</keyword>
<keyword id="KW-0820">tRNA-binding</keyword>
<comment type="function">
    <text evidence="1">Located at the top of the head of the 30S subunit, it contacts several helices of the 16S rRNA. In the 70S ribosome it contacts the 23S rRNA (bridge B1a) and protein L5 of the 50S subunit (bridge B1b), connecting the 2 subunits; these bridges are implicated in subunit movement. Contacts the tRNAs in the A and P-sites.</text>
</comment>
<comment type="subunit">
    <text evidence="1">Part of the 30S ribosomal subunit. Forms a loose heterodimer with protein S19. Forms two bridges to the 50S subunit in the 70S ribosome.</text>
</comment>
<comment type="similarity">
    <text evidence="1">Belongs to the universal ribosomal protein uS13 family.</text>
</comment>